<evidence type="ECO:0000255" key="1">
    <source>
        <dbReference type="HAMAP-Rule" id="MF_00074"/>
    </source>
</evidence>
<comment type="function">
    <text evidence="1">Specifically methylates the N7 position of guanine in position 527 of 16S rRNA.</text>
</comment>
<comment type="catalytic activity">
    <reaction evidence="1">
        <text>guanosine(527) in 16S rRNA + S-adenosyl-L-methionine = N(7)-methylguanosine(527) in 16S rRNA + S-adenosyl-L-homocysteine</text>
        <dbReference type="Rhea" id="RHEA:42732"/>
        <dbReference type="Rhea" id="RHEA-COMP:10209"/>
        <dbReference type="Rhea" id="RHEA-COMP:10210"/>
        <dbReference type="ChEBI" id="CHEBI:57856"/>
        <dbReference type="ChEBI" id="CHEBI:59789"/>
        <dbReference type="ChEBI" id="CHEBI:74269"/>
        <dbReference type="ChEBI" id="CHEBI:74480"/>
        <dbReference type="EC" id="2.1.1.170"/>
    </reaction>
</comment>
<comment type="subcellular location">
    <subcellularLocation>
        <location evidence="1">Cytoplasm</location>
    </subcellularLocation>
</comment>
<comment type="similarity">
    <text evidence="1">Belongs to the methyltransferase superfamily. RNA methyltransferase RsmG family.</text>
</comment>
<protein>
    <recommendedName>
        <fullName evidence="1">Ribosomal RNA small subunit methyltransferase G</fullName>
        <ecNumber evidence="1">2.1.1.170</ecNumber>
    </recommendedName>
    <alternativeName>
        <fullName evidence="1">16S rRNA 7-methylguanosine methyltransferase</fullName>
        <shortName evidence="1">16S rRNA m7G methyltransferase</shortName>
    </alternativeName>
</protein>
<keyword id="KW-0963">Cytoplasm</keyword>
<keyword id="KW-0489">Methyltransferase</keyword>
<keyword id="KW-1185">Reference proteome</keyword>
<keyword id="KW-0698">rRNA processing</keyword>
<keyword id="KW-0949">S-adenosyl-L-methionine</keyword>
<keyword id="KW-0808">Transferase</keyword>
<name>RSMG_NITV2</name>
<gene>
    <name evidence="1" type="primary">rsmG</name>
    <name type="ordered locus">DVU_1250</name>
</gene>
<sequence length="218" mass="24221">MAGRVEVSRKELTKFCREAGFEPSPGMLEAIAGYLELLLHWNRSMNLVGTRTWQDTFHTLVVDSLHLAAFLDTLPLPPEPEVWDLGAGAGLPGIPLRAAWQRGNYTMVEAREKRAMFLRMALARHPLPGTNVFQGRAEAFMPSRPPADLVVSRAFMPWRELLDFVSGHLAPGGQVVFLSLDPVPASLPEGWAVEAESLYGTRCGGRYFWSLRPIIVPN</sequence>
<accession>Q72CN3</accession>
<feature type="chain" id="PRO_0000342913" description="Ribosomal RNA small subunit methyltransferase G">
    <location>
        <begin position="1"/>
        <end position="218"/>
    </location>
</feature>
<feature type="binding site" evidence="1">
    <location>
        <position position="86"/>
    </location>
    <ligand>
        <name>S-adenosyl-L-methionine</name>
        <dbReference type="ChEBI" id="CHEBI:59789"/>
    </ligand>
</feature>
<feature type="binding site" evidence="1">
    <location>
        <position position="91"/>
    </location>
    <ligand>
        <name>S-adenosyl-L-methionine</name>
        <dbReference type="ChEBI" id="CHEBI:59789"/>
    </ligand>
</feature>
<feature type="binding site" evidence="1">
    <location>
        <begin position="137"/>
        <end position="138"/>
    </location>
    <ligand>
        <name>S-adenosyl-L-methionine</name>
        <dbReference type="ChEBI" id="CHEBI:59789"/>
    </ligand>
</feature>
<feature type="binding site" evidence="1">
    <location>
        <position position="153"/>
    </location>
    <ligand>
        <name>S-adenosyl-L-methionine</name>
        <dbReference type="ChEBI" id="CHEBI:59789"/>
    </ligand>
</feature>
<organism>
    <name type="scientific">Nitratidesulfovibrio vulgaris (strain ATCC 29579 / DSM 644 / CCUG 34227 / NCIMB 8303 / VKM B-1760 / Hildenborough)</name>
    <name type="common">Desulfovibrio vulgaris</name>
    <dbReference type="NCBI Taxonomy" id="882"/>
    <lineage>
        <taxon>Bacteria</taxon>
        <taxon>Pseudomonadati</taxon>
        <taxon>Thermodesulfobacteriota</taxon>
        <taxon>Desulfovibrionia</taxon>
        <taxon>Desulfovibrionales</taxon>
        <taxon>Desulfovibrionaceae</taxon>
        <taxon>Nitratidesulfovibrio</taxon>
    </lineage>
</organism>
<reference key="1">
    <citation type="journal article" date="2004" name="Nat. Biotechnol.">
        <title>The genome sequence of the anaerobic, sulfate-reducing bacterium Desulfovibrio vulgaris Hildenborough.</title>
        <authorList>
            <person name="Heidelberg J.F."/>
            <person name="Seshadri R."/>
            <person name="Haveman S.A."/>
            <person name="Hemme C.L."/>
            <person name="Paulsen I.T."/>
            <person name="Kolonay J.F."/>
            <person name="Eisen J.A."/>
            <person name="Ward N.L."/>
            <person name="Methe B.A."/>
            <person name="Brinkac L.M."/>
            <person name="Daugherty S.C."/>
            <person name="DeBoy R.T."/>
            <person name="Dodson R.J."/>
            <person name="Durkin A.S."/>
            <person name="Madupu R."/>
            <person name="Nelson W.C."/>
            <person name="Sullivan S.A."/>
            <person name="Fouts D.E."/>
            <person name="Haft D.H."/>
            <person name="Selengut J."/>
            <person name="Peterson J.D."/>
            <person name="Davidsen T.M."/>
            <person name="Zafar N."/>
            <person name="Zhou L."/>
            <person name="Radune D."/>
            <person name="Dimitrov G."/>
            <person name="Hance M."/>
            <person name="Tran K."/>
            <person name="Khouri H.M."/>
            <person name="Gill J."/>
            <person name="Utterback T.R."/>
            <person name="Feldblyum T.V."/>
            <person name="Wall J.D."/>
            <person name="Voordouw G."/>
            <person name="Fraser C.M."/>
        </authorList>
    </citation>
    <scope>NUCLEOTIDE SEQUENCE [LARGE SCALE GENOMIC DNA]</scope>
    <source>
        <strain>ATCC 29579 / DSM 644 / CCUG 34227 / NCIMB 8303 / VKM B-1760 / Hildenborough</strain>
    </source>
</reference>
<proteinExistence type="inferred from homology"/>
<dbReference type="EC" id="2.1.1.170" evidence="1"/>
<dbReference type="EMBL" id="AE017285">
    <property type="protein sequence ID" value="AAS95728.1"/>
    <property type="molecule type" value="Genomic_DNA"/>
</dbReference>
<dbReference type="RefSeq" id="WP_010938546.1">
    <property type="nucleotide sequence ID" value="NC_002937.3"/>
</dbReference>
<dbReference type="RefSeq" id="YP_010469.1">
    <property type="nucleotide sequence ID" value="NC_002937.3"/>
</dbReference>
<dbReference type="SMR" id="Q72CN3"/>
<dbReference type="STRING" id="882.DVU_1250"/>
<dbReference type="PaxDb" id="882-DVU_1250"/>
<dbReference type="EnsemblBacteria" id="AAS95728">
    <property type="protein sequence ID" value="AAS95728"/>
    <property type="gene ID" value="DVU_1250"/>
</dbReference>
<dbReference type="KEGG" id="dvu:DVU_1250"/>
<dbReference type="PATRIC" id="fig|882.5.peg.1169"/>
<dbReference type="eggNOG" id="COG0357">
    <property type="taxonomic scope" value="Bacteria"/>
</dbReference>
<dbReference type="HOGENOM" id="CLU_065341_2_3_7"/>
<dbReference type="OrthoDB" id="9808773at2"/>
<dbReference type="PhylomeDB" id="Q72CN3"/>
<dbReference type="Proteomes" id="UP000002194">
    <property type="component" value="Chromosome"/>
</dbReference>
<dbReference type="GO" id="GO:0005829">
    <property type="term" value="C:cytosol"/>
    <property type="evidence" value="ECO:0007669"/>
    <property type="project" value="TreeGrafter"/>
</dbReference>
<dbReference type="GO" id="GO:0070043">
    <property type="term" value="F:rRNA (guanine-N7-)-methyltransferase activity"/>
    <property type="evidence" value="ECO:0007669"/>
    <property type="project" value="UniProtKB-UniRule"/>
</dbReference>
<dbReference type="CDD" id="cd02440">
    <property type="entry name" value="AdoMet_MTases"/>
    <property type="match status" value="1"/>
</dbReference>
<dbReference type="Gene3D" id="3.40.50.150">
    <property type="entry name" value="Vaccinia Virus protein VP39"/>
    <property type="match status" value="1"/>
</dbReference>
<dbReference type="HAMAP" id="MF_00074">
    <property type="entry name" value="16SrRNA_methyltr_G"/>
    <property type="match status" value="1"/>
</dbReference>
<dbReference type="InterPro" id="IPR003682">
    <property type="entry name" value="rRNA_ssu_MeTfrase_G"/>
</dbReference>
<dbReference type="InterPro" id="IPR029063">
    <property type="entry name" value="SAM-dependent_MTases_sf"/>
</dbReference>
<dbReference type="PANTHER" id="PTHR31760">
    <property type="entry name" value="S-ADENOSYL-L-METHIONINE-DEPENDENT METHYLTRANSFERASES SUPERFAMILY PROTEIN"/>
    <property type="match status" value="1"/>
</dbReference>
<dbReference type="PANTHER" id="PTHR31760:SF0">
    <property type="entry name" value="S-ADENOSYL-L-METHIONINE-DEPENDENT METHYLTRANSFERASES SUPERFAMILY PROTEIN"/>
    <property type="match status" value="1"/>
</dbReference>
<dbReference type="Pfam" id="PF02527">
    <property type="entry name" value="GidB"/>
    <property type="match status" value="1"/>
</dbReference>
<dbReference type="SUPFAM" id="SSF53335">
    <property type="entry name" value="S-adenosyl-L-methionine-dependent methyltransferases"/>
    <property type="match status" value="1"/>
</dbReference>